<protein>
    <recommendedName>
        <fullName>Anaphase-promoting complex subunit 7</fullName>
    </recommendedName>
    <alternativeName>
        <fullName>Cyclosome subunit 7</fullName>
    </alternativeName>
</protein>
<organism>
    <name type="scientific">Arabidopsis thaliana</name>
    <name type="common">Mouse-ear cress</name>
    <dbReference type="NCBI Taxonomy" id="3702"/>
    <lineage>
        <taxon>Eukaryota</taxon>
        <taxon>Viridiplantae</taxon>
        <taxon>Streptophyta</taxon>
        <taxon>Embryophyta</taxon>
        <taxon>Tracheophyta</taxon>
        <taxon>Spermatophyta</taxon>
        <taxon>Magnoliopsida</taxon>
        <taxon>eudicotyledons</taxon>
        <taxon>Gunneridae</taxon>
        <taxon>Pentapetalae</taxon>
        <taxon>rosids</taxon>
        <taxon>malvids</taxon>
        <taxon>Brassicales</taxon>
        <taxon>Brassicaceae</taxon>
        <taxon>Camelineae</taxon>
        <taxon>Arabidopsis</taxon>
    </lineage>
</organism>
<proteinExistence type="evidence at transcript level"/>
<name>APC7_ARATH</name>
<keyword id="KW-0025">Alternative splicing</keyword>
<keyword id="KW-0131">Cell cycle</keyword>
<keyword id="KW-0132">Cell division</keyword>
<keyword id="KW-0498">Mitosis</keyword>
<keyword id="KW-0539">Nucleus</keyword>
<keyword id="KW-1185">Reference proteome</keyword>
<keyword id="KW-0677">Repeat</keyword>
<keyword id="KW-0802">TPR repeat</keyword>
<keyword id="KW-0833">Ubl conjugation pathway</keyword>
<reference key="1">
    <citation type="journal article" date="1999" name="Nature">
        <title>Sequence and analysis of chromosome 2 of the plant Arabidopsis thaliana.</title>
        <authorList>
            <person name="Lin X."/>
            <person name="Kaul S."/>
            <person name="Rounsley S.D."/>
            <person name="Shea T.P."/>
            <person name="Benito M.-I."/>
            <person name="Town C.D."/>
            <person name="Fujii C.Y."/>
            <person name="Mason T.M."/>
            <person name="Bowman C.L."/>
            <person name="Barnstead M.E."/>
            <person name="Feldblyum T.V."/>
            <person name="Buell C.R."/>
            <person name="Ketchum K.A."/>
            <person name="Lee J.J."/>
            <person name="Ronning C.M."/>
            <person name="Koo H.L."/>
            <person name="Moffat K.S."/>
            <person name="Cronin L.A."/>
            <person name="Shen M."/>
            <person name="Pai G."/>
            <person name="Van Aken S."/>
            <person name="Umayam L."/>
            <person name="Tallon L.J."/>
            <person name="Gill J.E."/>
            <person name="Adams M.D."/>
            <person name="Carrera A.J."/>
            <person name="Creasy T.H."/>
            <person name="Goodman H.M."/>
            <person name="Somerville C.R."/>
            <person name="Copenhaver G.P."/>
            <person name="Preuss D."/>
            <person name="Nierman W.C."/>
            <person name="White O."/>
            <person name="Eisen J.A."/>
            <person name="Salzberg S.L."/>
            <person name="Fraser C.M."/>
            <person name="Venter J.C."/>
        </authorList>
    </citation>
    <scope>NUCLEOTIDE SEQUENCE [LARGE SCALE GENOMIC DNA]</scope>
    <source>
        <strain>cv. Columbia</strain>
    </source>
</reference>
<reference key="2">
    <citation type="journal article" date="2017" name="Plant J.">
        <title>Araport11: a complete reannotation of the Arabidopsis thaliana reference genome.</title>
        <authorList>
            <person name="Cheng C.Y."/>
            <person name="Krishnakumar V."/>
            <person name="Chan A.P."/>
            <person name="Thibaud-Nissen F."/>
            <person name="Schobel S."/>
            <person name="Town C.D."/>
        </authorList>
    </citation>
    <scope>GENOME REANNOTATION</scope>
    <source>
        <strain>cv. Columbia</strain>
    </source>
</reference>
<reference key="3">
    <citation type="journal article" date="2003" name="Science">
        <title>Empirical analysis of transcriptional activity in the Arabidopsis genome.</title>
        <authorList>
            <person name="Yamada K."/>
            <person name="Lim J."/>
            <person name="Dale J.M."/>
            <person name="Chen H."/>
            <person name="Shinn P."/>
            <person name="Palm C.J."/>
            <person name="Southwick A.M."/>
            <person name="Wu H.C."/>
            <person name="Kim C.J."/>
            <person name="Nguyen M."/>
            <person name="Pham P.K."/>
            <person name="Cheuk R.F."/>
            <person name="Karlin-Newmann G."/>
            <person name="Liu S.X."/>
            <person name="Lam B."/>
            <person name="Sakano H."/>
            <person name="Wu T."/>
            <person name="Yu G."/>
            <person name="Miranda M."/>
            <person name="Quach H.L."/>
            <person name="Tripp M."/>
            <person name="Chang C.H."/>
            <person name="Lee J.M."/>
            <person name="Toriumi M.J."/>
            <person name="Chan M.M."/>
            <person name="Tang C.C."/>
            <person name="Onodera C.S."/>
            <person name="Deng J.M."/>
            <person name="Akiyama K."/>
            <person name="Ansari Y."/>
            <person name="Arakawa T."/>
            <person name="Banh J."/>
            <person name="Banno F."/>
            <person name="Bowser L."/>
            <person name="Brooks S.Y."/>
            <person name="Carninci P."/>
            <person name="Chao Q."/>
            <person name="Choy N."/>
            <person name="Enju A."/>
            <person name="Goldsmith A.D."/>
            <person name="Gurjal M."/>
            <person name="Hansen N.F."/>
            <person name="Hayashizaki Y."/>
            <person name="Johnson-Hopson C."/>
            <person name="Hsuan V.W."/>
            <person name="Iida K."/>
            <person name="Karnes M."/>
            <person name="Khan S."/>
            <person name="Koesema E."/>
            <person name="Ishida J."/>
            <person name="Jiang P.X."/>
            <person name="Jones T."/>
            <person name="Kawai J."/>
            <person name="Kamiya A."/>
            <person name="Meyers C."/>
            <person name="Nakajima M."/>
            <person name="Narusaka M."/>
            <person name="Seki M."/>
            <person name="Sakurai T."/>
            <person name="Satou M."/>
            <person name="Tamse R."/>
            <person name="Vaysberg M."/>
            <person name="Wallender E.K."/>
            <person name="Wong C."/>
            <person name="Yamamura Y."/>
            <person name="Yuan S."/>
            <person name="Shinozaki K."/>
            <person name="Davis R.W."/>
            <person name="Theologis A."/>
            <person name="Ecker J.R."/>
        </authorList>
    </citation>
    <scope>NUCLEOTIDE SEQUENCE [LARGE SCALE MRNA] (ISOFORM 1)</scope>
    <source>
        <strain>cv. Columbia</strain>
    </source>
</reference>
<reference key="4">
    <citation type="journal article" date="2009" name="DNA Res.">
        <title>Analysis of multiple occurrences of alternative splicing events in Arabidopsis thaliana using novel sequenced full-length cDNAs.</title>
        <authorList>
            <person name="Iida K."/>
            <person name="Fukami-Kobayashi K."/>
            <person name="Toyoda A."/>
            <person name="Sakaki Y."/>
            <person name="Kobayashi M."/>
            <person name="Seki M."/>
            <person name="Shinozaki K."/>
        </authorList>
    </citation>
    <scope>NUCLEOTIDE SEQUENCE [LARGE SCALE MRNA] (ISOFORM 2)</scope>
    <source>
        <strain>cv. Columbia</strain>
    </source>
</reference>
<sequence>MEVPKEQIATLIEHGLYDSAEMLGCFLVSSPTVSAETSPQLKAENLILLGDALFHQREHRRAIHTYKQALHHYTRIPKQSSGISRSSLSLSTRSSVNASSISAINENEVRFKIASSHFALNETKAAIAEMESVKTRSLEMNILMAKLHRNSGYNRGAIAFYKECLRQCPYVLEAVIGLAELGVSAKDIISSFTQTSNRSAKVSLDQIDPTRWLQRYVEAQCCVASHAYKGALELFAELLQRFPNNVHLLTETAKVEAIIGKNDEAIMRFEKVRSIDPYTLTSMDEYAMLLQIKCDYSRLNKLVHDLLSVDHTRAEVFVALSVLWERKDARTALSYAEKSIRVDERHIPGYIMKGNLLLQAKRPEAAAIAFRAAQNLRSDLRSYQGLVHSYLAFGKTKEALYTAREAMNAMPQSAKALKLVGDVHAFTSSGREKAKKFYESGLRLEPGYLGAVLALAELHLMEGRNGDAVSLLERYLKDYADDSLHVKLAQVFAATNMLQDSLSHFQAALRINPQNEAAKKGLDRLEKQMKGIDPDATDENDENDVEDVDGDTEEAELM</sequence>
<comment type="function">
    <text evidence="1">Component of the anaphase promoting complex/cyclosome (APC/C), a cell cycle-regulated E3 ubiquitin-protein ligase complex that controls progression through mitosis and the G1 phase of the cell cycle. The APC/C complex controls several key steps in the cell cycle by mediating ubiquitination and subsequent degradation of target proteins such as cyclins. The APC/C complex is required for the female gametophyte development and is involved in several aspect of development by controlling cell division and cell elongation. Involved in the control of endoreduplication (By similarity).</text>
</comment>
<comment type="pathway">
    <text>Protein modification; protein ubiquitination.</text>
</comment>
<comment type="subunit">
    <text evidence="1">The APC/C is composed of at least 10 subunits.</text>
</comment>
<comment type="subcellular location">
    <subcellularLocation>
        <location evidence="1">Nucleus</location>
    </subcellularLocation>
</comment>
<comment type="alternative products">
    <event type="alternative splicing"/>
    <isoform>
        <id>Q8VY89-1</id>
        <name>1</name>
        <sequence type="displayed"/>
    </isoform>
    <isoform>
        <id>Q8VY89-2</id>
        <name>2</name>
        <sequence type="described" ref="VSP_039620 VSP_039621"/>
    </isoform>
    <isoform>
        <id>Q8VY89-3</id>
        <name>3</name>
        <sequence type="described" ref="VSP_039622 VSP_039623"/>
    </isoform>
</comment>
<comment type="similarity">
    <text evidence="4">Belongs to the APC7 family.</text>
</comment>
<comment type="sequence caution" evidence="4">
    <conflict type="erroneous gene model prediction">
        <sequence resource="EMBL-CDS" id="AAC79619"/>
    </conflict>
</comment>
<gene>
    <name type="primary">APC7</name>
    <name type="ordered locus">At2g39090</name>
    <name type="ORF">T7F6.26</name>
</gene>
<feature type="chain" id="PRO_0000396843" description="Anaphase-promoting complex subunit 7">
    <location>
        <begin position="1"/>
        <end position="558"/>
    </location>
</feature>
<feature type="repeat" description="TPR 1">
    <location>
        <begin position="43"/>
        <end position="76"/>
    </location>
</feature>
<feature type="repeat" description="TPR 2">
    <location>
        <begin position="138"/>
        <end position="171"/>
    </location>
</feature>
<feature type="repeat" description="TPR 3">
    <location>
        <begin position="212"/>
        <end position="245"/>
    </location>
</feature>
<feature type="repeat" description="TPR 4">
    <location>
        <begin position="246"/>
        <end position="279"/>
    </location>
</feature>
<feature type="repeat" description="TPR 5">
    <location>
        <begin position="314"/>
        <end position="346"/>
    </location>
</feature>
<feature type="repeat" description="TPR 6">
    <location>
        <begin position="348"/>
        <end position="380"/>
    </location>
</feature>
<feature type="repeat" description="TPR 7">
    <location>
        <begin position="381"/>
        <end position="413"/>
    </location>
</feature>
<feature type="repeat" description="TPR 8">
    <location>
        <begin position="414"/>
        <end position="448"/>
    </location>
</feature>
<feature type="repeat" description="TPR 9">
    <location>
        <begin position="450"/>
        <end position="482"/>
    </location>
</feature>
<feature type="repeat" description="TPR 10">
    <location>
        <begin position="483"/>
        <end position="515"/>
    </location>
</feature>
<feature type="region of interest" description="Disordered" evidence="2">
    <location>
        <begin position="519"/>
        <end position="558"/>
    </location>
</feature>
<feature type="compositionally biased region" description="Basic and acidic residues" evidence="2">
    <location>
        <begin position="519"/>
        <end position="533"/>
    </location>
</feature>
<feature type="compositionally biased region" description="Acidic residues" evidence="2">
    <location>
        <begin position="535"/>
        <end position="558"/>
    </location>
</feature>
<feature type="splice variant" id="VSP_039620" description="In isoform 2." evidence="3">
    <original>SYLAFGKTKEALYTARE</original>
    <variation>EGKRSDIHFHCCTVLVV</variation>
    <location>
        <begin position="389"/>
        <end position="405"/>
    </location>
</feature>
<feature type="splice variant" id="VSP_039621" description="In isoform 2." evidence="3">
    <location>
        <begin position="406"/>
        <end position="558"/>
    </location>
</feature>
<feature type="splice variant" id="VSP_039622" description="In isoform 3." evidence="4">
    <original>INPQ</original>
    <variation>FMKF</variation>
    <location>
        <begin position="511"/>
        <end position="514"/>
    </location>
</feature>
<feature type="splice variant" id="VSP_039623" description="In isoform 3." evidence="4">
    <location>
        <begin position="515"/>
        <end position="558"/>
    </location>
</feature>
<accession>Q8VY89</accession>
<accession>C0Z2F9</accession>
<accession>Q2V418</accession>
<accession>Q9ZUZ9</accession>
<dbReference type="EMBL" id="AC005770">
    <property type="protein sequence ID" value="AAC79619.1"/>
    <property type="status" value="ALT_SEQ"/>
    <property type="molecule type" value="Genomic_DNA"/>
</dbReference>
<dbReference type="EMBL" id="CP002685">
    <property type="protein sequence ID" value="AEC09633.1"/>
    <property type="molecule type" value="Genomic_DNA"/>
</dbReference>
<dbReference type="EMBL" id="CP002685">
    <property type="protein sequence ID" value="AEC09634.1"/>
    <property type="molecule type" value="Genomic_DNA"/>
</dbReference>
<dbReference type="EMBL" id="AY072346">
    <property type="protein sequence ID" value="AAL61953.1"/>
    <property type="molecule type" value="mRNA"/>
</dbReference>
<dbReference type="EMBL" id="BT002547">
    <property type="protein sequence ID" value="AAO00907.1"/>
    <property type="molecule type" value="mRNA"/>
</dbReference>
<dbReference type="EMBL" id="AK318773">
    <property type="protein sequence ID" value="BAH56888.1"/>
    <property type="molecule type" value="mRNA"/>
</dbReference>
<dbReference type="PIR" id="A84813">
    <property type="entry name" value="A84813"/>
</dbReference>
<dbReference type="RefSeq" id="NP_001031513.1">
    <molecule id="Q8VY89-3"/>
    <property type="nucleotide sequence ID" value="NM_001036436.1"/>
</dbReference>
<dbReference type="RefSeq" id="NP_850309.1">
    <molecule id="Q8VY89-1"/>
    <property type="nucleotide sequence ID" value="NM_179978.3"/>
</dbReference>
<dbReference type="SMR" id="Q8VY89"/>
<dbReference type="BioGRID" id="3833">
    <property type="interactions" value="17"/>
</dbReference>
<dbReference type="FunCoup" id="Q8VY89">
    <property type="interactions" value="2685"/>
</dbReference>
<dbReference type="IntAct" id="Q8VY89">
    <property type="interactions" value="17"/>
</dbReference>
<dbReference type="STRING" id="3702.Q8VY89"/>
<dbReference type="iPTMnet" id="Q8VY89"/>
<dbReference type="PaxDb" id="3702-AT2G39090.1"/>
<dbReference type="ProteomicsDB" id="244992">
    <molecule id="Q8VY89-1"/>
</dbReference>
<dbReference type="EnsemblPlants" id="AT2G39090.1">
    <molecule id="Q8VY89-1"/>
    <property type="protein sequence ID" value="AT2G39090.1"/>
    <property type="gene ID" value="AT2G39090"/>
</dbReference>
<dbReference type="EnsemblPlants" id="AT2G39090.2">
    <molecule id="Q8VY89-3"/>
    <property type="protein sequence ID" value="AT2G39090.2"/>
    <property type="gene ID" value="AT2G39090"/>
</dbReference>
<dbReference type="GeneID" id="818495"/>
<dbReference type="Gramene" id="AT2G39090.1">
    <molecule id="Q8VY89-1"/>
    <property type="protein sequence ID" value="AT2G39090.1"/>
    <property type="gene ID" value="AT2G39090"/>
</dbReference>
<dbReference type="Gramene" id="AT2G39090.2">
    <molecule id="Q8VY89-3"/>
    <property type="protein sequence ID" value="AT2G39090.2"/>
    <property type="gene ID" value="AT2G39090"/>
</dbReference>
<dbReference type="KEGG" id="ath:AT2G39090"/>
<dbReference type="Araport" id="AT2G39090"/>
<dbReference type="TAIR" id="AT2G39090">
    <property type="gene designation" value="APC7"/>
</dbReference>
<dbReference type="eggNOG" id="KOG1174">
    <property type="taxonomic scope" value="Eukaryota"/>
</dbReference>
<dbReference type="HOGENOM" id="CLU_026953_0_1_1"/>
<dbReference type="InParanoid" id="Q8VY89"/>
<dbReference type="OMA" id="MGECYYY"/>
<dbReference type="OrthoDB" id="308440at2759"/>
<dbReference type="PhylomeDB" id="Q8VY89"/>
<dbReference type="UniPathway" id="UPA00143"/>
<dbReference type="PRO" id="PR:Q8VY89"/>
<dbReference type="Proteomes" id="UP000006548">
    <property type="component" value="Chromosome 2"/>
</dbReference>
<dbReference type="ExpressionAtlas" id="Q8VY89">
    <property type="expression patterns" value="baseline and differential"/>
</dbReference>
<dbReference type="GO" id="GO:0005634">
    <property type="term" value="C:nucleus"/>
    <property type="evidence" value="ECO:0007669"/>
    <property type="project" value="UniProtKB-SubCell"/>
</dbReference>
<dbReference type="GO" id="GO:0051301">
    <property type="term" value="P:cell division"/>
    <property type="evidence" value="ECO:0007669"/>
    <property type="project" value="UniProtKB-KW"/>
</dbReference>
<dbReference type="GO" id="GO:0016567">
    <property type="term" value="P:protein ubiquitination"/>
    <property type="evidence" value="ECO:0007669"/>
    <property type="project" value="UniProtKB-UniPathway"/>
</dbReference>
<dbReference type="Gene3D" id="1.25.40.10">
    <property type="entry name" value="Tetratricopeptide repeat domain"/>
    <property type="match status" value="2"/>
</dbReference>
<dbReference type="InterPro" id="IPR011990">
    <property type="entry name" value="TPR-like_helical_dom_sf"/>
</dbReference>
<dbReference type="InterPro" id="IPR019734">
    <property type="entry name" value="TPR_rpt"/>
</dbReference>
<dbReference type="PANTHER" id="PTHR12558:SF36">
    <property type="entry name" value="ANAPHASE-PROMOTING COMPLEX SUBUNIT 7"/>
    <property type="match status" value="1"/>
</dbReference>
<dbReference type="PANTHER" id="PTHR12558">
    <property type="entry name" value="CELL DIVISION CYCLE 16,23,27"/>
    <property type="match status" value="1"/>
</dbReference>
<dbReference type="Pfam" id="PF14559">
    <property type="entry name" value="TPR_19"/>
    <property type="match status" value="1"/>
</dbReference>
<dbReference type="SMART" id="SM00028">
    <property type="entry name" value="TPR"/>
    <property type="match status" value="6"/>
</dbReference>
<dbReference type="SUPFAM" id="SSF48452">
    <property type="entry name" value="TPR-like"/>
    <property type="match status" value="2"/>
</dbReference>
<dbReference type="PROSITE" id="PS50005">
    <property type="entry name" value="TPR"/>
    <property type="match status" value="4"/>
</dbReference>
<dbReference type="PROSITE" id="PS50293">
    <property type="entry name" value="TPR_REGION"/>
    <property type="match status" value="3"/>
</dbReference>
<evidence type="ECO:0000250" key="1"/>
<evidence type="ECO:0000256" key="2">
    <source>
        <dbReference type="SAM" id="MobiDB-lite"/>
    </source>
</evidence>
<evidence type="ECO:0000303" key="3">
    <source>
    </source>
</evidence>
<evidence type="ECO:0000305" key="4"/>